<organism>
    <name type="scientific">Leptothrix cholodnii (strain ATCC 51168 / LMG 8142 / SP-6)</name>
    <name type="common">Leptothrix discophora (strain SP-6)</name>
    <dbReference type="NCBI Taxonomy" id="395495"/>
    <lineage>
        <taxon>Bacteria</taxon>
        <taxon>Pseudomonadati</taxon>
        <taxon>Pseudomonadota</taxon>
        <taxon>Betaproteobacteria</taxon>
        <taxon>Burkholderiales</taxon>
        <taxon>Sphaerotilaceae</taxon>
        <taxon>Leptothrix</taxon>
    </lineage>
</organism>
<proteinExistence type="inferred from homology"/>
<evidence type="ECO:0000255" key="1">
    <source>
        <dbReference type="HAMAP-Rule" id="MF_00382"/>
    </source>
</evidence>
<evidence type="ECO:0000305" key="2"/>
<protein>
    <recommendedName>
        <fullName evidence="1">Large ribosomal subunit protein bL20</fullName>
    </recommendedName>
    <alternativeName>
        <fullName evidence="2">50S ribosomal protein L20</fullName>
    </alternativeName>
</protein>
<dbReference type="EMBL" id="CP001013">
    <property type="protein sequence ID" value="ACB34015.1"/>
    <property type="molecule type" value="Genomic_DNA"/>
</dbReference>
<dbReference type="RefSeq" id="WP_012346776.1">
    <property type="nucleotide sequence ID" value="NC_010524.1"/>
</dbReference>
<dbReference type="SMR" id="B1XYZ6"/>
<dbReference type="STRING" id="395495.Lcho_1748"/>
<dbReference type="KEGG" id="lch:Lcho_1748"/>
<dbReference type="eggNOG" id="COG0292">
    <property type="taxonomic scope" value="Bacteria"/>
</dbReference>
<dbReference type="HOGENOM" id="CLU_123265_0_1_4"/>
<dbReference type="OrthoDB" id="9808966at2"/>
<dbReference type="Proteomes" id="UP000001693">
    <property type="component" value="Chromosome"/>
</dbReference>
<dbReference type="GO" id="GO:1990904">
    <property type="term" value="C:ribonucleoprotein complex"/>
    <property type="evidence" value="ECO:0007669"/>
    <property type="project" value="UniProtKB-KW"/>
</dbReference>
<dbReference type="GO" id="GO:0005840">
    <property type="term" value="C:ribosome"/>
    <property type="evidence" value="ECO:0007669"/>
    <property type="project" value="UniProtKB-KW"/>
</dbReference>
<dbReference type="GO" id="GO:0019843">
    <property type="term" value="F:rRNA binding"/>
    <property type="evidence" value="ECO:0007669"/>
    <property type="project" value="UniProtKB-UniRule"/>
</dbReference>
<dbReference type="GO" id="GO:0003735">
    <property type="term" value="F:structural constituent of ribosome"/>
    <property type="evidence" value="ECO:0007669"/>
    <property type="project" value="InterPro"/>
</dbReference>
<dbReference type="GO" id="GO:0000027">
    <property type="term" value="P:ribosomal large subunit assembly"/>
    <property type="evidence" value="ECO:0007669"/>
    <property type="project" value="UniProtKB-UniRule"/>
</dbReference>
<dbReference type="GO" id="GO:0006412">
    <property type="term" value="P:translation"/>
    <property type="evidence" value="ECO:0007669"/>
    <property type="project" value="InterPro"/>
</dbReference>
<dbReference type="CDD" id="cd07026">
    <property type="entry name" value="Ribosomal_L20"/>
    <property type="match status" value="1"/>
</dbReference>
<dbReference type="FunFam" id="1.10.1900.20:FF:000001">
    <property type="entry name" value="50S ribosomal protein L20"/>
    <property type="match status" value="1"/>
</dbReference>
<dbReference type="Gene3D" id="6.10.160.10">
    <property type="match status" value="1"/>
</dbReference>
<dbReference type="Gene3D" id="1.10.1900.20">
    <property type="entry name" value="Ribosomal protein L20"/>
    <property type="match status" value="1"/>
</dbReference>
<dbReference type="HAMAP" id="MF_00382">
    <property type="entry name" value="Ribosomal_bL20"/>
    <property type="match status" value="1"/>
</dbReference>
<dbReference type="InterPro" id="IPR005813">
    <property type="entry name" value="Ribosomal_bL20"/>
</dbReference>
<dbReference type="InterPro" id="IPR049946">
    <property type="entry name" value="RIBOSOMAL_L20_CS"/>
</dbReference>
<dbReference type="InterPro" id="IPR035566">
    <property type="entry name" value="Ribosomal_protein_bL20_C"/>
</dbReference>
<dbReference type="NCBIfam" id="TIGR01032">
    <property type="entry name" value="rplT_bact"/>
    <property type="match status" value="1"/>
</dbReference>
<dbReference type="PANTHER" id="PTHR10986">
    <property type="entry name" value="39S RIBOSOMAL PROTEIN L20"/>
    <property type="match status" value="1"/>
</dbReference>
<dbReference type="Pfam" id="PF00453">
    <property type="entry name" value="Ribosomal_L20"/>
    <property type="match status" value="1"/>
</dbReference>
<dbReference type="PRINTS" id="PR00062">
    <property type="entry name" value="RIBOSOMALL20"/>
</dbReference>
<dbReference type="SUPFAM" id="SSF74731">
    <property type="entry name" value="Ribosomal protein L20"/>
    <property type="match status" value="1"/>
</dbReference>
<dbReference type="PROSITE" id="PS00937">
    <property type="entry name" value="RIBOSOMAL_L20"/>
    <property type="match status" value="1"/>
</dbReference>
<sequence>MPRVKRGVTARARHKKVLALAKGFRGRRKNVYRIAKQAVMKAGQYAYRDRRAKKRVFRRLWIARINAASRSLGLTYSKFIAGLKKAQIDIDRKVLSDMAIHDPAAFGSIVDKVKAQLA</sequence>
<accession>B1XYZ6</accession>
<feature type="chain" id="PRO_1000122333" description="Large ribosomal subunit protein bL20">
    <location>
        <begin position="1"/>
        <end position="118"/>
    </location>
</feature>
<keyword id="KW-1185">Reference proteome</keyword>
<keyword id="KW-0687">Ribonucleoprotein</keyword>
<keyword id="KW-0689">Ribosomal protein</keyword>
<keyword id="KW-0694">RNA-binding</keyword>
<keyword id="KW-0699">rRNA-binding</keyword>
<reference key="1">
    <citation type="submission" date="2008-03" db="EMBL/GenBank/DDBJ databases">
        <title>Complete sequence of Leptothrix cholodnii SP-6.</title>
        <authorList>
            <consortium name="US DOE Joint Genome Institute"/>
            <person name="Copeland A."/>
            <person name="Lucas S."/>
            <person name="Lapidus A."/>
            <person name="Glavina del Rio T."/>
            <person name="Dalin E."/>
            <person name="Tice H."/>
            <person name="Bruce D."/>
            <person name="Goodwin L."/>
            <person name="Pitluck S."/>
            <person name="Chertkov O."/>
            <person name="Brettin T."/>
            <person name="Detter J.C."/>
            <person name="Han C."/>
            <person name="Kuske C.R."/>
            <person name="Schmutz J."/>
            <person name="Larimer F."/>
            <person name="Land M."/>
            <person name="Hauser L."/>
            <person name="Kyrpides N."/>
            <person name="Lykidis A."/>
            <person name="Emerson D."/>
            <person name="Richardson P."/>
        </authorList>
    </citation>
    <scope>NUCLEOTIDE SEQUENCE [LARGE SCALE GENOMIC DNA]</scope>
    <source>
        <strain>ATCC 51168 / LMG 8142 / SP-6</strain>
    </source>
</reference>
<name>RL20_LEPCP</name>
<gene>
    <name evidence="1" type="primary">rplT</name>
    <name type="ordered locus">Lcho_1748</name>
</gene>
<comment type="function">
    <text evidence="1">Binds directly to 23S ribosomal RNA and is necessary for the in vitro assembly process of the 50S ribosomal subunit. It is not involved in the protein synthesizing functions of that subunit.</text>
</comment>
<comment type="similarity">
    <text evidence="1">Belongs to the bacterial ribosomal protein bL20 family.</text>
</comment>